<reference key="1">
    <citation type="thesis" date="2011" institute="University of Texas" country="United States">
        <title>Functional analyses of Arabidopsis apyrases 3 through 7.</title>
        <authorList>
            <person name="Yang J."/>
        </authorList>
    </citation>
    <scope>NUCLEOTIDE SEQUENCE [MRNA]</scope>
    <scope>DISRUPTION PHENOTYPE</scope>
    <scope>TISSUE SPECIFICITY</scope>
    <scope>INDUCTION</scope>
    <scope>FUNCTION</scope>
    <source>
        <strain>cv. Columbia</strain>
    </source>
</reference>
<reference key="2">
    <citation type="submission" date="2012-04" db="EMBL/GenBank/DDBJ databases">
        <title>Cloning the Arabidopsis apyrase gene, APY7.</title>
        <authorList>
            <person name="Lao J."/>
            <person name="Loque D."/>
            <person name="Heazlewood J.L."/>
        </authorList>
    </citation>
    <scope>NUCLEOTIDE SEQUENCE [MRNA]</scope>
    <source>
        <strain>cv. Columbia</strain>
        <tissue>Stem</tissue>
    </source>
</reference>
<reference key="3">
    <citation type="journal article" date="1999" name="Nature">
        <title>Sequence and analysis of chromosome 4 of the plant Arabidopsis thaliana.</title>
        <authorList>
            <person name="Mayer K.F.X."/>
            <person name="Schueller C."/>
            <person name="Wambutt R."/>
            <person name="Murphy G."/>
            <person name="Volckaert G."/>
            <person name="Pohl T."/>
            <person name="Duesterhoeft A."/>
            <person name="Stiekema W."/>
            <person name="Entian K.-D."/>
            <person name="Terryn N."/>
            <person name="Harris B."/>
            <person name="Ansorge W."/>
            <person name="Brandt P."/>
            <person name="Grivell L.A."/>
            <person name="Rieger M."/>
            <person name="Weichselgartner M."/>
            <person name="de Simone V."/>
            <person name="Obermaier B."/>
            <person name="Mache R."/>
            <person name="Mueller M."/>
            <person name="Kreis M."/>
            <person name="Delseny M."/>
            <person name="Puigdomenech P."/>
            <person name="Watson M."/>
            <person name="Schmidtheini T."/>
            <person name="Reichert B."/>
            <person name="Portetelle D."/>
            <person name="Perez-Alonso M."/>
            <person name="Boutry M."/>
            <person name="Bancroft I."/>
            <person name="Vos P."/>
            <person name="Hoheisel J."/>
            <person name="Zimmermann W."/>
            <person name="Wedler H."/>
            <person name="Ridley P."/>
            <person name="Langham S.-A."/>
            <person name="McCullagh B."/>
            <person name="Bilham L."/>
            <person name="Robben J."/>
            <person name="van der Schueren J."/>
            <person name="Grymonprez B."/>
            <person name="Chuang Y.-J."/>
            <person name="Vandenbussche F."/>
            <person name="Braeken M."/>
            <person name="Weltjens I."/>
            <person name="Voet M."/>
            <person name="Bastiaens I."/>
            <person name="Aert R."/>
            <person name="Defoor E."/>
            <person name="Weitzenegger T."/>
            <person name="Bothe G."/>
            <person name="Ramsperger U."/>
            <person name="Hilbert H."/>
            <person name="Braun M."/>
            <person name="Holzer E."/>
            <person name="Brandt A."/>
            <person name="Peters S."/>
            <person name="van Staveren M."/>
            <person name="Dirkse W."/>
            <person name="Mooijman P."/>
            <person name="Klein Lankhorst R."/>
            <person name="Rose M."/>
            <person name="Hauf J."/>
            <person name="Koetter P."/>
            <person name="Berneiser S."/>
            <person name="Hempel S."/>
            <person name="Feldpausch M."/>
            <person name="Lamberth S."/>
            <person name="Van den Daele H."/>
            <person name="De Keyser A."/>
            <person name="Buysshaert C."/>
            <person name="Gielen J."/>
            <person name="Villarroel R."/>
            <person name="De Clercq R."/>
            <person name="van Montagu M."/>
            <person name="Rogers J."/>
            <person name="Cronin A."/>
            <person name="Quail M.A."/>
            <person name="Bray-Allen S."/>
            <person name="Clark L."/>
            <person name="Doggett J."/>
            <person name="Hall S."/>
            <person name="Kay M."/>
            <person name="Lennard N."/>
            <person name="McLay K."/>
            <person name="Mayes R."/>
            <person name="Pettett A."/>
            <person name="Rajandream M.A."/>
            <person name="Lyne M."/>
            <person name="Benes V."/>
            <person name="Rechmann S."/>
            <person name="Borkova D."/>
            <person name="Bloecker H."/>
            <person name="Scharfe M."/>
            <person name="Grimm M."/>
            <person name="Loehnert T.-H."/>
            <person name="Dose S."/>
            <person name="de Haan M."/>
            <person name="Maarse A.C."/>
            <person name="Schaefer M."/>
            <person name="Mueller-Auer S."/>
            <person name="Gabel C."/>
            <person name="Fuchs M."/>
            <person name="Fartmann B."/>
            <person name="Granderath K."/>
            <person name="Dauner D."/>
            <person name="Herzl A."/>
            <person name="Neumann S."/>
            <person name="Argiriou A."/>
            <person name="Vitale D."/>
            <person name="Liguori R."/>
            <person name="Piravandi E."/>
            <person name="Massenet O."/>
            <person name="Quigley F."/>
            <person name="Clabauld G."/>
            <person name="Muendlein A."/>
            <person name="Felber R."/>
            <person name="Schnabl S."/>
            <person name="Hiller R."/>
            <person name="Schmidt W."/>
            <person name="Lecharny A."/>
            <person name="Aubourg S."/>
            <person name="Chefdor F."/>
            <person name="Cooke R."/>
            <person name="Berger C."/>
            <person name="Monfort A."/>
            <person name="Casacuberta E."/>
            <person name="Gibbons T."/>
            <person name="Weber N."/>
            <person name="Vandenbol M."/>
            <person name="Bargues M."/>
            <person name="Terol J."/>
            <person name="Torres A."/>
            <person name="Perez-Perez A."/>
            <person name="Purnelle B."/>
            <person name="Bent E."/>
            <person name="Johnson S."/>
            <person name="Tacon D."/>
            <person name="Jesse T."/>
            <person name="Heijnen L."/>
            <person name="Schwarz S."/>
            <person name="Scholler P."/>
            <person name="Heber S."/>
            <person name="Francs P."/>
            <person name="Bielke C."/>
            <person name="Frishman D."/>
            <person name="Haase D."/>
            <person name="Lemcke K."/>
            <person name="Mewes H.-W."/>
            <person name="Stocker S."/>
            <person name="Zaccaria P."/>
            <person name="Bevan M."/>
            <person name="Wilson R.K."/>
            <person name="de la Bastide M."/>
            <person name="Habermann K."/>
            <person name="Parnell L."/>
            <person name="Dedhia N."/>
            <person name="Gnoj L."/>
            <person name="Schutz K."/>
            <person name="Huang E."/>
            <person name="Spiegel L."/>
            <person name="Sekhon M."/>
            <person name="Murray J."/>
            <person name="Sheet P."/>
            <person name="Cordes M."/>
            <person name="Abu-Threideh J."/>
            <person name="Stoneking T."/>
            <person name="Kalicki J."/>
            <person name="Graves T."/>
            <person name="Harmon G."/>
            <person name="Edwards J."/>
            <person name="Latreille P."/>
            <person name="Courtney L."/>
            <person name="Cloud J."/>
            <person name="Abbott A."/>
            <person name="Scott K."/>
            <person name="Johnson D."/>
            <person name="Minx P."/>
            <person name="Bentley D."/>
            <person name="Fulton B."/>
            <person name="Miller N."/>
            <person name="Greco T."/>
            <person name="Kemp K."/>
            <person name="Kramer J."/>
            <person name="Fulton L."/>
            <person name="Mardis E."/>
            <person name="Dante M."/>
            <person name="Pepin K."/>
            <person name="Hillier L.W."/>
            <person name="Nelson J."/>
            <person name="Spieth J."/>
            <person name="Ryan E."/>
            <person name="Andrews S."/>
            <person name="Geisel C."/>
            <person name="Layman D."/>
            <person name="Du H."/>
            <person name="Ali J."/>
            <person name="Berghoff A."/>
            <person name="Jones K."/>
            <person name="Drone K."/>
            <person name="Cotton M."/>
            <person name="Joshu C."/>
            <person name="Antonoiu B."/>
            <person name="Zidanic M."/>
            <person name="Strong C."/>
            <person name="Sun H."/>
            <person name="Lamar B."/>
            <person name="Yordan C."/>
            <person name="Ma P."/>
            <person name="Zhong J."/>
            <person name="Preston R."/>
            <person name="Vil D."/>
            <person name="Shekher M."/>
            <person name="Matero A."/>
            <person name="Shah R."/>
            <person name="Swaby I.K."/>
            <person name="O'Shaughnessy A."/>
            <person name="Rodriguez M."/>
            <person name="Hoffman J."/>
            <person name="Till S."/>
            <person name="Granat S."/>
            <person name="Shohdy N."/>
            <person name="Hasegawa A."/>
            <person name="Hameed A."/>
            <person name="Lodhi M."/>
            <person name="Johnson A."/>
            <person name="Chen E."/>
            <person name="Marra M.A."/>
            <person name="Martienssen R."/>
            <person name="McCombie W.R."/>
        </authorList>
    </citation>
    <scope>NUCLEOTIDE SEQUENCE [LARGE SCALE GENOMIC DNA]</scope>
    <source>
        <strain>cv. Columbia</strain>
    </source>
</reference>
<reference key="4">
    <citation type="journal article" date="2017" name="Plant J.">
        <title>Araport11: a complete reannotation of the Arabidopsis thaliana reference genome.</title>
        <authorList>
            <person name="Cheng C.Y."/>
            <person name="Krishnakumar V."/>
            <person name="Chan A.P."/>
            <person name="Thibaud-Nissen F."/>
            <person name="Schobel S."/>
            <person name="Town C.D."/>
        </authorList>
    </citation>
    <scope>GENOME REANNOTATION</scope>
    <source>
        <strain>cv. Columbia</strain>
    </source>
</reference>
<accession>F4JSH1</accession>
<accession>O49676</accession>
<gene>
    <name type="primary">APY7</name>
    <name type="ordered locus">At4g19180</name>
    <name type="ORF">T18B16.150</name>
</gene>
<keyword id="KW-0067">ATP-binding</keyword>
<keyword id="KW-0106">Calcium</keyword>
<keyword id="KW-0325">Glycoprotein</keyword>
<keyword id="KW-0378">Hydrolase</keyword>
<keyword id="KW-0472">Membrane</keyword>
<keyword id="KW-0547">Nucleotide-binding</keyword>
<keyword id="KW-1185">Reference proteome</keyword>
<keyword id="KW-0812">Transmembrane</keyword>
<keyword id="KW-1133">Transmembrane helix</keyword>
<organism>
    <name type="scientific">Arabidopsis thaliana</name>
    <name type="common">Mouse-ear cress</name>
    <dbReference type="NCBI Taxonomy" id="3702"/>
    <lineage>
        <taxon>Eukaryota</taxon>
        <taxon>Viridiplantae</taxon>
        <taxon>Streptophyta</taxon>
        <taxon>Embryophyta</taxon>
        <taxon>Tracheophyta</taxon>
        <taxon>Spermatophyta</taxon>
        <taxon>Magnoliopsida</taxon>
        <taxon>eudicotyledons</taxon>
        <taxon>Gunneridae</taxon>
        <taxon>Pentapetalae</taxon>
        <taxon>rosids</taxon>
        <taxon>malvids</taxon>
        <taxon>Brassicales</taxon>
        <taxon>Brassicaceae</taxon>
        <taxon>Camelineae</taxon>
        <taxon>Arabidopsis</taxon>
    </lineage>
</organism>
<proteinExistence type="evidence at transcript level"/>
<dbReference type="EC" id="3.6.1.5"/>
<dbReference type="EMBL" id="JF830012">
    <property type="protein sequence ID" value="AEJ38088.1"/>
    <property type="molecule type" value="mRNA"/>
</dbReference>
<dbReference type="EMBL" id="JQ965809">
    <property type="protein sequence ID" value="AFL69929.1"/>
    <property type="molecule type" value="mRNA"/>
</dbReference>
<dbReference type="EMBL" id="AL021687">
    <property type="protein sequence ID" value="CAA16707.1"/>
    <property type="status" value="ALT_SEQ"/>
    <property type="molecule type" value="Genomic_DNA"/>
</dbReference>
<dbReference type="EMBL" id="AL161550">
    <property type="protein sequence ID" value="CAB78920.1"/>
    <property type="status" value="ALT_SEQ"/>
    <property type="molecule type" value="Genomic_DNA"/>
</dbReference>
<dbReference type="EMBL" id="CP002687">
    <property type="protein sequence ID" value="AEE84155.1"/>
    <property type="molecule type" value="Genomic_DNA"/>
</dbReference>
<dbReference type="EMBL" id="CP002687">
    <property type="protein sequence ID" value="ANM68162.1"/>
    <property type="molecule type" value="Genomic_DNA"/>
</dbReference>
<dbReference type="EMBL" id="CP002687">
    <property type="protein sequence ID" value="ANM68163.1"/>
    <property type="molecule type" value="Genomic_DNA"/>
</dbReference>
<dbReference type="PIR" id="T04439">
    <property type="entry name" value="T04439"/>
</dbReference>
<dbReference type="RefSeq" id="NP_001329939.1">
    <property type="nucleotide sequence ID" value="NM_001341328.1"/>
</dbReference>
<dbReference type="RefSeq" id="NP_001329940.1">
    <property type="nucleotide sequence ID" value="NM_001341329.1"/>
</dbReference>
<dbReference type="RefSeq" id="NP_567579.2">
    <property type="nucleotide sequence ID" value="NM_118037.7"/>
</dbReference>
<dbReference type="SMR" id="F4JSH1"/>
<dbReference type="FunCoup" id="F4JSH1">
    <property type="interactions" value="563"/>
</dbReference>
<dbReference type="STRING" id="3702.F4JSH1"/>
<dbReference type="GlyCosmos" id="F4JSH1">
    <property type="glycosylation" value="6 sites, No reported glycans"/>
</dbReference>
<dbReference type="GlyGen" id="F4JSH1">
    <property type="glycosylation" value="6 sites"/>
</dbReference>
<dbReference type="iPTMnet" id="F4JSH1"/>
<dbReference type="PaxDb" id="3702-AT4G19180.1"/>
<dbReference type="ProteomicsDB" id="240603"/>
<dbReference type="EnsemblPlants" id="AT4G19180.1">
    <property type="protein sequence ID" value="AT4G19180.1"/>
    <property type="gene ID" value="AT4G19180"/>
</dbReference>
<dbReference type="EnsemblPlants" id="AT4G19180.2">
    <property type="protein sequence ID" value="AT4G19180.2"/>
    <property type="gene ID" value="AT4G19180"/>
</dbReference>
<dbReference type="EnsemblPlants" id="AT4G19180.3">
    <property type="protein sequence ID" value="AT4G19180.3"/>
    <property type="gene ID" value="AT4G19180"/>
</dbReference>
<dbReference type="GeneID" id="827656"/>
<dbReference type="Gramene" id="AT4G19180.1">
    <property type="protein sequence ID" value="AT4G19180.1"/>
    <property type="gene ID" value="AT4G19180"/>
</dbReference>
<dbReference type="Gramene" id="AT4G19180.2">
    <property type="protein sequence ID" value="AT4G19180.2"/>
    <property type="gene ID" value="AT4G19180"/>
</dbReference>
<dbReference type="Gramene" id="AT4G19180.3">
    <property type="protein sequence ID" value="AT4G19180.3"/>
    <property type="gene ID" value="AT4G19180"/>
</dbReference>
<dbReference type="KEGG" id="ath:AT4G19180"/>
<dbReference type="Araport" id="AT4G19180"/>
<dbReference type="TAIR" id="AT4G19180">
    <property type="gene designation" value="APY7"/>
</dbReference>
<dbReference type="eggNOG" id="KOG1386">
    <property type="taxonomic scope" value="Eukaryota"/>
</dbReference>
<dbReference type="HOGENOM" id="CLU_010246_2_2_1"/>
<dbReference type="InParanoid" id="F4JSH1"/>
<dbReference type="OMA" id="YKEDYIC"/>
<dbReference type="PRO" id="PR:F4JSH1"/>
<dbReference type="Proteomes" id="UP000006548">
    <property type="component" value="Chromosome 4"/>
</dbReference>
<dbReference type="ExpressionAtlas" id="F4JSH1">
    <property type="expression patterns" value="baseline and differential"/>
</dbReference>
<dbReference type="GO" id="GO:0016020">
    <property type="term" value="C:membrane"/>
    <property type="evidence" value="ECO:0007669"/>
    <property type="project" value="UniProtKB-SubCell"/>
</dbReference>
<dbReference type="GO" id="GO:0004050">
    <property type="term" value="F:apyrase activity"/>
    <property type="evidence" value="ECO:0007669"/>
    <property type="project" value="UniProtKB-EC"/>
</dbReference>
<dbReference type="GO" id="GO:0005524">
    <property type="term" value="F:ATP binding"/>
    <property type="evidence" value="ECO:0007669"/>
    <property type="project" value="UniProtKB-KW"/>
</dbReference>
<dbReference type="GO" id="GO:0009901">
    <property type="term" value="P:anther dehiscence"/>
    <property type="evidence" value="ECO:0000316"/>
    <property type="project" value="TAIR"/>
</dbReference>
<dbReference type="GO" id="GO:0010584">
    <property type="term" value="P:pollen exine formation"/>
    <property type="evidence" value="ECO:0000315"/>
    <property type="project" value="TAIR"/>
</dbReference>
<dbReference type="CDD" id="cd24043">
    <property type="entry name" value="ASKHA_NBD_AtAPY7-like"/>
    <property type="match status" value="1"/>
</dbReference>
<dbReference type="FunFam" id="3.30.420.150:FF:000016">
    <property type="entry name" value="Probable apyrase 7"/>
    <property type="match status" value="1"/>
</dbReference>
<dbReference type="FunFam" id="3.30.420.40:FF:000399">
    <property type="entry name" value="Probable apyrase 7"/>
    <property type="match status" value="1"/>
</dbReference>
<dbReference type="Gene3D" id="3.30.420.40">
    <property type="match status" value="1"/>
</dbReference>
<dbReference type="Gene3D" id="3.30.420.150">
    <property type="entry name" value="Exopolyphosphatase. Domain 2"/>
    <property type="match status" value="1"/>
</dbReference>
<dbReference type="InterPro" id="IPR000407">
    <property type="entry name" value="GDA1_CD39_NTPase"/>
</dbReference>
<dbReference type="PANTHER" id="PTHR11782">
    <property type="entry name" value="ADENOSINE/GUANOSINE DIPHOSPHATASE"/>
    <property type="match status" value="1"/>
</dbReference>
<dbReference type="PANTHER" id="PTHR11782:SF125">
    <property type="entry name" value="APYRASE 7-RELATED"/>
    <property type="match status" value="1"/>
</dbReference>
<dbReference type="Pfam" id="PF01150">
    <property type="entry name" value="GDA1_CD39"/>
    <property type="match status" value="1"/>
</dbReference>
<feature type="chain" id="PRO_0000420345" description="Probable apyrase 7">
    <location>
        <begin position="1"/>
        <end position="740"/>
    </location>
</feature>
<feature type="topological domain" description="Cytoplasmic" evidence="2">
    <location>
        <begin position="1"/>
        <end position="113"/>
    </location>
</feature>
<feature type="transmembrane region" description="Helical" evidence="2">
    <location>
        <begin position="114"/>
        <end position="134"/>
    </location>
</feature>
<feature type="topological domain" description="Extracellular" evidence="2">
    <location>
        <begin position="135"/>
        <end position="581"/>
    </location>
</feature>
<feature type="transmembrane region" description="Helical" evidence="2">
    <location>
        <begin position="582"/>
        <end position="602"/>
    </location>
</feature>
<feature type="topological domain" description="Cytoplasmic" evidence="2">
    <location>
        <begin position="603"/>
        <end position="740"/>
    </location>
</feature>
<feature type="region of interest" description="Disordered" evidence="3">
    <location>
        <begin position="706"/>
        <end position="740"/>
    </location>
</feature>
<feature type="compositionally biased region" description="Low complexity" evidence="3">
    <location>
        <begin position="708"/>
        <end position="721"/>
    </location>
</feature>
<feature type="active site" description="Proton acceptor" evidence="1">
    <location>
        <position position="284"/>
    </location>
</feature>
<feature type="binding site" evidence="5">
    <location>
        <begin position="147"/>
        <end position="157"/>
    </location>
    <ligand>
        <name>ATP</name>
        <dbReference type="ChEBI" id="CHEBI:30616"/>
    </ligand>
</feature>
<feature type="binding site" evidence="5">
    <location>
        <begin position="309"/>
        <end position="319"/>
    </location>
    <ligand>
        <name>ATP</name>
        <dbReference type="ChEBI" id="CHEBI:30616"/>
    </ligand>
</feature>
<feature type="glycosylation site" description="N-linked (GlcNAc...) asparagine" evidence="2">
    <location>
        <position position="137"/>
    </location>
</feature>
<feature type="glycosylation site" description="N-linked (GlcNAc...) asparagine" evidence="2">
    <location>
        <position position="208"/>
    </location>
</feature>
<feature type="glycosylation site" description="N-linked (GlcNAc...) asparagine" evidence="2">
    <location>
        <position position="330"/>
    </location>
</feature>
<feature type="glycosylation site" description="N-linked (GlcNAc...) asparagine" evidence="2">
    <location>
        <position position="374"/>
    </location>
</feature>
<feature type="glycosylation site" description="N-linked (GlcNAc...) asparagine" evidence="2">
    <location>
        <position position="439"/>
    </location>
</feature>
<feature type="glycosylation site" description="N-linked (GlcNAc...) asparagine" evidence="2">
    <location>
        <position position="484"/>
    </location>
</feature>
<name>APY7_ARATH</name>
<sequence>MVFGRITELFTAASSRLPAGSQSSVPYMPTGSSPDVGTSVSDSISIGNGGRKNCLRHSASLQDFSSYHGFDPEESILPREAISWGQNGSSFSKEKGSVPNGTNPSTRRKLIRAVMIVMCLFLFAFLVYIVSMYIYTNWSRGASRYYVVFDCGSTGTRAYVYQASINYKKDSSLPIVMKSLTEGISRKSRGRAYDRMETEPGFDKLVNNRTGLKTAIKPLIQWAEKQIPKNAHRTTSLFVYATAGVRRLRPADSSWILGNVWSILAKSPFTCRREWVKIISGTEEAYFGWTALNYQTSMLGALPKKATFGALDLGGSSLQVTFENEERTHNETNLNLRIGSVNHHLSAYSLAGYGLNDAFDRSVVHLLKKLPNVNKSDLIEGKLEMKHPCLNSGYNGQYICSQCASSVQGGKKGKSGVSIKLVGAPNWGECSALAKNAVNSSEWSNAKHGVDCDLQPCALPDGYPRPHGQFYAVSGFFVVYRFFNLSAEASLDDVLEKGREFCDKAWQVARTSVSPQPFIEQYCFRAPYIVSLLREGLYITDKQIIIGSGSITWTLGVALLESGKALSSTLGLKSYETLSMKINPIALISILILSLLLLLCALSRVSNCLPRFFRKSYLPLFRHNSTSASSVLNIPSPFRFQRWSPMSTGVKTPLSPTVRGSPRRPFSFGSSIQLMESSLYSSSSCVMHSCSSDSLGDIQYDSTGSFWSSPRRSQMRLQSRRSQSREDLSSSLADSHMLKM</sequence>
<comment type="function">
    <text evidence="1 4">Catalyzes the hydrolysis of phosphoanhydride bonds of nucleoside tri- and di-phosphates (By similarity). Involved in the regulation of pollen and anther development.</text>
</comment>
<comment type="catalytic activity">
    <reaction>
        <text>a ribonucleoside 5'-triphosphate + 2 H2O = a ribonucleoside 5'-phosphate + 2 phosphate + 2 H(+)</text>
        <dbReference type="Rhea" id="RHEA:36795"/>
        <dbReference type="ChEBI" id="CHEBI:15377"/>
        <dbReference type="ChEBI" id="CHEBI:15378"/>
        <dbReference type="ChEBI" id="CHEBI:43474"/>
        <dbReference type="ChEBI" id="CHEBI:58043"/>
        <dbReference type="ChEBI" id="CHEBI:61557"/>
        <dbReference type="EC" id="3.6.1.5"/>
    </reaction>
</comment>
<comment type="cofactor">
    <cofactor evidence="1">
        <name>Ca(2+)</name>
        <dbReference type="ChEBI" id="CHEBI:29108"/>
    </cofactor>
</comment>
<comment type="subcellular location">
    <subcellularLocation>
        <location evidence="1">Membrane</location>
        <topology evidence="1">Multi-pass membrane protein</topology>
    </subcellularLocation>
</comment>
<comment type="tissue specificity">
    <text evidence="4">Detected in mature pollen grains. Also expressed in more diverse tissues such as roots, leaves, stems, pistils and sepals. More particularly expressed in the vascular bundle.</text>
</comment>
<comment type="induction">
    <text evidence="4">By wounding and drought stress.</text>
</comment>
<comment type="disruption phenotype">
    <text evidence="4">No visible phenotype. Apy6 and dapy7 double mutant exhibits late anther dehiscence and low male fertility. Pollen grains of double mutant are largely deformed in shape and in most cases, the cell walls of the pollen grains are interconnected.</text>
</comment>
<comment type="similarity">
    <text evidence="5">Belongs to the GDA1/CD39 NTPase family.</text>
</comment>
<comment type="sequence caution" evidence="5">
    <conflict type="erroneous gene model prediction">
        <sequence resource="EMBL-CDS" id="CAA16707"/>
    </conflict>
    <text>The predicted gene has been split into 2 genes: At4g19180 and At4g19185.</text>
</comment>
<comment type="sequence caution" evidence="5">
    <conflict type="erroneous gene model prediction">
        <sequence resource="EMBL-CDS" id="CAB78920"/>
    </conflict>
    <text>The predicted gene has been split into 2 genes: At4g19180 and At4g19185.</text>
</comment>
<protein>
    <recommendedName>
        <fullName>Probable apyrase 7</fullName>
        <shortName>AtAPY7</shortName>
        <ecNumber>3.6.1.5</ecNumber>
    </recommendedName>
    <alternativeName>
        <fullName>ATP-diphosphatase</fullName>
    </alternativeName>
    <alternativeName>
        <fullName>ATP-diphosphohydrolase</fullName>
    </alternativeName>
    <alternativeName>
        <fullName>Adenosine diphosphatase</fullName>
        <shortName>ADPase</shortName>
    </alternativeName>
    <alternativeName>
        <fullName>NTPDase</fullName>
    </alternativeName>
    <alternativeName>
        <fullName>Nucleoside triphosphate diphosphohydrolase 7</fullName>
    </alternativeName>
</protein>
<evidence type="ECO:0000250" key="1"/>
<evidence type="ECO:0000255" key="2"/>
<evidence type="ECO:0000256" key="3">
    <source>
        <dbReference type="SAM" id="MobiDB-lite"/>
    </source>
</evidence>
<evidence type="ECO:0000269" key="4">
    <source ref="1"/>
</evidence>
<evidence type="ECO:0000305" key="5"/>